<organismHost>
    <name type="scientific">Homo sapiens</name>
    <name type="common">Human</name>
    <dbReference type="NCBI Taxonomy" id="9606"/>
</organismHost>
<protein>
    <recommendedName>
        <fullName evidence="1">Regulatory protein E2</fullName>
    </recommendedName>
</protein>
<organism>
    <name type="scientific">Human papillomavirus 35</name>
    <dbReference type="NCBI Taxonomy" id="10587"/>
    <lineage>
        <taxon>Viruses</taxon>
        <taxon>Monodnaviria</taxon>
        <taxon>Shotokuvirae</taxon>
        <taxon>Cossaviricota</taxon>
        <taxon>Papovaviricetes</taxon>
        <taxon>Zurhausenvirales</taxon>
        <taxon>Papillomaviridae</taxon>
        <taxon>Firstpapillomavirinae</taxon>
        <taxon>Alphapapillomavirus</taxon>
        <taxon>Alphapapillomavirus 9</taxon>
    </lineage>
</organism>
<gene>
    <name evidence="1" type="primary">E2</name>
</gene>
<sequence>MMETLSQRLSVCQDKILEHYETDSTCLSDHIQYWKLIRLECAVFYKAREMGIKTLNHQVVPTQAISKAKAMQAIELQLMLETLNTTEYSTETWTLQETSIELYTTVPQGCFKKHGVTVEVQFDGDKQNTMHYTNWTHIYILEDSICTVVKGLVNYKGIYYVHQGVETYYVTFREEAKKYGKKNIWEVHVGGQVIVCPESVFSSTELSTAEIATQLHAYNTTETHTKACSVGTTETQKTNHKRLRGGTELPYNPTKRVRLSAVDSVDRGVYSTSDCTNKDRCGSCSTTTPIVHLKGDANTLKCLRYRLGKYKALYQDASSTWRWTCTNDKKQIAIVTLTYTTEYQRDKFLTTVKIPNTVTVSKGYMSI</sequence>
<keyword id="KW-0010">Activator</keyword>
<keyword id="KW-0235">DNA replication</keyword>
<keyword id="KW-0238">DNA-binding</keyword>
<keyword id="KW-0244">Early protein</keyword>
<keyword id="KW-1048">Host nucleus</keyword>
<keyword id="KW-1017">Isopeptide bond</keyword>
<keyword id="KW-0597">Phosphoprotein</keyword>
<keyword id="KW-1185">Reference proteome</keyword>
<keyword id="KW-0678">Repressor</keyword>
<keyword id="KW-0804">Transcription</keyword>
<keyword id="KW-0805">Transcription regulation</keyword>
<keyword id="KW-0832">Ubl conjugation</keyword>
<feature type="chain" id="PRO_0000133215" description="Regulatory protein E2">
    <location>
        <begin position="1"/>
        <end position="367"/>
    </location>
</feature>
<feature type="region of interest" description="Transactivation domain" evidence="1">
    <location>
        <begin position="1"/>
        <end position="201"/>
    </location>
</feature>
<feature type="region of interest" description="DNA-binding domain" evidence="1">
    <location>
        <begin position="287"/>
        <end position="367"/>
    </location>
</feature>
<feature type="cross-link" description="Glycyl lysine isopeptide (Lys-Gly) (interchain with G-Cter in SUMO)" evidence="1">
    <location>
        <position position="294"/>
    </location>
</feature>
<feature type="sequence conflict" description="In Ref. 2; AAA46969." evidence="2" ref="2">
    <original>T</original>
    <variation>D</variation>
    <location>
        <position position="92"/>
    </location>
</feature>
<feature type="sequence conflict" description="In Ref. 2." evidence="2" ref="2">
    <original>QG</original>
    <variation>TR</variation>
    <location>
        <begin position="108"/>
        <end position="109"/>
    </location>
</feature>
<feature type="sequence conflict" description="In Ref. 2." evidence="2" ref="2">
    <original>F</original>
    <variation>L</variation>
    <location>
        <position position="111"/>
    </location>
</feature>
<feature type="sequence conflict" description="In Ref. 2." evidence="2" ref="2">
    <original>HGV</original>
    <variation>DVY</variation>
    <location>
        <begin position="114"/>
        <end position="116"/>
    </location>
</feature>
<feature type="sequence conflict" description="In Ref. 2; AAA46969." evidence="2" ref="2">
    <original>V</original>
    <variation>A</variation>
    <location>
        <position position="120"/>
    </location>
</feature>
<feature type="sequence conflict" description="In Ref. 2; AAA46969." evidence="2" ref="2">
    <original>L</original>
    <variation>S</variation>
    <location>
        <position position="303"/>
    </location>
</feature>
<name>VE2_HPV35</name>
<comment type="function">
    <text evidence="1">Plays a role in the initiation of viral DNA replication. A dimer of E2 interacts with a dimer of E1 in order to improve specificity of E1 DNA binding activity. Once the complex recognizes and binds DNA at specific sites, the E2 dimer is removed from DNA. E2 also regulates viral transcription through binding to the E2RE response element (5'-ACCNNNNNNGGT-3') present in multiple copies in the regulatory regions of the viral genome. Activates or represses transcription depending on E2RE's position with regards to proximal promoter elements including the TATA-box. Repression occurs by sterically hindering the assembly of the transcription initiation complex.</text>
</comment>
<comment type="subunit">
    <text evidence="1">Binds DNA as homodimer. Interacts with protein E1; this interaction greatly increases E1 DNA-binding activity. Interacts with protein L1; this interaction enhances E2-dependent replication and transcription activation. Interacts with protein L2; this interaction inhibits E2 transcriptional activity but not DNA replication function E2. Interacts with protein E7; this interaction inhibits E7 oncogenic activity. Interacts with host TAF1; this interaction modulates E2-dependent transcriptional regulation. Interacts with host BRD4; this interaction mediates E2 transcriptional activation function. Additionally, the interaction with host BRD4 on mitotic chromosomes mediates tethering of the viral genome. Interacts with host TOPBP1; this interaction is required for optimal viral DNA replication.</text>
</comment>
<comment type="subcellular location">
    <subcellularLocation>
        <location evidence="1">Host nucleus</location>
    </subcellularLocation>
</comment>
<comment type="PTM">
    <text evidence="1">Phosphorylated.</text>
</comment>
<comment type="PTM">
    <text evidence="1">Sumoylation plays a regulatory role in E2 transcriptional activity.</text>
</comment>
<comment type="similarity">
    <text evidence="1">Belongs to the papillomaviridae E2 protein family.</text>
</comment>
<evidence type="ECO:0000255" key="1">
    <source>
        <dbReference type="HAMAP-Rule" id="MF_04001"/>
    </source>
</evidence>
<evidence type="ECO:0000305" key="2"/>
<accession>P27222</accession>
<dbReference type="EMBL" id="X74477">
    <property type="protein sequence ID" value="CAA52564.1"/>
    <property type="status" value="ALT_TERM"/>
    <property type="molecule type" value="Genomic_DNA"/>
</dbReference>
<dbReference type="EMBL" id="M74117">
    <property type="protein sequence ID" value="AAA46969.1"/>
    <property type="molecule type" value="Genomic_DNA"/>
</dbReference>
<dbReference type="PIR" id="B40824">
    <property type="entry name" value="W2WL35"/>
</dbReference>
<dbReference type="PIR" id="S36524">
    <property type="entry name" value="S36524"/>
</dbReference>
<dbReference type="SMR" id="P27222"/>
<dbReference type="Proteomes" id="UP000007711">
    <property type="component" value="Segment"/>
</dbReference>
<dbReference type="Proteomes" id="UP000113298">
    <property type="component" value="Genome"/>
</dbReference>
<dbReference type="GO" id="GO:0042025">
    <property type="term" value="C:host cell nucleus"/>
    <property type="evidence" value="ECO:0007669"/>
    <property type="project" value="UniProtKB-SubCell"/>
</dbReference>
<dbReference type="GO" id="GO:0003677">
    <property type="term" value="F:DNA binding"/>
    <property type="evidence" value="ECO:0007669"/>
    <property type="project" value="UniProtKB-UniRule"/>
</dbReference>
<dbReference type="GO" id="GO:0003700">
    <property type="term" value="F:DNA-binding transcription factor activity"/>
    <property type="evidence" value="ECO:0007669"/>
    <property type="project" value="UniProtKB-UniRule"/>
</dbReference>
<dbReference type="GO" id="GO:0000166">
    <property type="term" value="F:nucleotide binding"/>
    <property type="evidence" value="ECO:0007669"/>
    <property type="project" value="UniProtKB-UniRule"/>
</dbReference>
<dbReference type="GO" id="GO:0006260">
    <property type="term" value="P:DNA replication"/>
    <property type="evidence" value="ECO:0007669"/>
    <property type="project" value="UniProtKB-KW"/>
</dbReference>
<dbReference type="GO" id="GO:0006351">
    <property type="term" value="P:DNA-templated transcription"/>
    <property type="evidence" value="ECO:0007669"/>
    <property type="project" value="UniProtKB-UniRule"/>
</dbReference>
<dbReference type="GO" id="GO:0006275">
    <property type="term" value="P:regulation of DNA replication"/>
    <property type="evidence" value="ECO:0007669"/>
    <property type="project" value="UniProtKB-UniRule"/>
</dbReference>
<dbReference type="GO" id="GO:0039693">
    <property type="term" value="P:viral DNA genome replication"/>
    <property type="evidence" value="ECO:0007669"/>
    <property type="project" value="UniProtKB-UniRule"/>
</dbReference>
<dbReference type="Gene3D" id="3.30.70.330">
    <property type="match status" value="1"/>
</dbReference>
<dbReference type="Gene3D" id="1.10.287.30">
    <property type="entry name" value="E2 (early) protein, N terminal domain, subdomain 1"/>
    <property type="match status" value="1"/>
</dbReference>
<dbReference type="Gene3D" id="2.170.200.10">
    <property type="entry name" value="Papillomavirus E2 early protein domain"/>
    <property type="match status" value="1"/>
</dbReference>
<dbReference type="HAMAP" id="MF_04001">
    <property type="entry name" value="PPV_E2"/>
    <property type="match status" value="1"/>
</dbReference>
<dbReference type="InterPro" id="IPR035975">
    <property type="entry name" value="E2/EBNA1_C_sf"/>
</dbReference>
<dbReference type="InterPro" id="IPR012677">
    <property type="entry name" value="Nucleotide-bd_a/b_plait_sf"/>
</dbReference>
<dbReference type="InterPro" id="IPR000427">
    <property type="entry name" value="Papillomavirus_E2_C"/>
</dbReference>
<dbReference type="InterPro" id="IPR001866">
    <property type="entry name" value="PPV_E2_N"/>
</dbReference>
<dbReference type="InterPro" id="IPR033668">
    <property type="entry name" value="Reg_prot_E2"/>
</dbReference>
<dbReference type="InterPro" id="IPR036050">
    <property type="entry name" value="Regulatory_protein_E2_N"/>
</dbReference>
<dbReference type="InterPro" id="IPR042503">
    <property type="entry name" value="Regulatory_protein_E2_N_1"/>
</dbReference>
<dbReference type="InterPro" id="IPR042504">
    <property type="entry name" value="Regulatory_protein_E2_N_2"/>
</dbReference>
<dbReference type="Pfam" id="PF00511">
    <property type="entry name" value="PPV_E2_C"/>
    <property type="match status" value="1"/>
</dbReference>
<dbReference type="Pfam" id="PF00508">
    <property type="entry name" value="PPV_E2_N"/>
    <property type="match status" value="1"/>
</dbReference>
<dbReference type="SUPFAM" id="SSF51332">
    <property type="entry name" value="E2 regulatory, transactivation domain"/>
    <property type="match status" value="1"/>
</dbReference>
<dbReference type="SUPFAM" id="SSF54957">
    <property type="entry name" value="Viral DNA-binding domain"/>
    <property type="match status" value="1"/>
</dbReference>
<reference key="1">
    <citation type="journal article" date="1994" name="Curr. Top. Microbiol. Immunol.">
        <title>Primer-directed sequencing of human papillomavirus types.</title>
        <authorList>
            <person name="Delius H."/>
            <person name="Hofmann B."/>
        </authorList>
    </citation>
    <scope>NUCLEOTIDE SEQUENCE [GENOMIC DNA]</scope>
    <source>
        <strain>Isolate 35H</strain>
    </source>
</reference>
<reference key="2">
    <citation type="journal article" date="1992" name="Virology">
        <title>The phylogenetic relationship and complete nucleotide sequence of human papillomavirus type 35.</title>
        <authorList>
            <person name="Marich J.E."/>
            <person name="Pontsler A.V."/>
            <person name="Rice S.M."/>
            <person name="McGraw K.A."/>
            <person name="Dubensky T.W."/>
        </authorList>
    </citation>
    <scope>NUCLEOTIDE SEQUENCE [GENOMIC DNA]</scope>
</reference>
<proteinExistence type="inferred from homology"/>